<dbReference type="EC" id="6.3.4.3" evidence="1"/>
<dbReference type="EMBL" id="CP000577">
    <property type="protein sequence ID" value="ABN77418.1"/>
    <property type="molecule type" value="Genomic_DNA"/>
</dbReference>
<dbReference type="RefSeq" id="WP_002720843.1">
    <property type="nucleotide sequence ID" value="NC_009049.1"/>
</dbReference>
<dbReference type="SMR" id="A3PM52"/>
<dbReference type="KEGG" id="rsh:Rsph17029_2316"/>
<dbReference type="HOGENOM" id="CLU_003601_3_3_5"/>
<dbReference type="UniPathway" id="UPA00193"/>
<dbReference type="GO" id="GO:0005524">
    <property type="term" value="F:ATP binding"/>
    <property type="evidence" value="ECO:0007669"/>
    <property type="project" value="UniProtKB-UniRule"/>
</dbReference>
<dbReference type="GO" id="GO:0004329">
    <property type="term" value="F:formate-tetrahydrofolate ligase activity"/>
    <property type="evidence" value="ECO:0007669"/>
    <property type="project" value="UniProtKB-UniRule"/>
</dbReference>
<dbReference type="GO" id="GO:0035999">
    <property type="term" value="P:tetrahydrofolate interconversion"/>
    <property type="evidence" value="ECO:0007669"/>
    <property type="project" value="UniProtKB-UniRule"/>
</dbReference>
<dbReference type="CDD" id="cd00477">
    <property type="entry name" value="FTHFS"/>
    <property type="match status" value="1"/>
</dbReference>
<dbReference type="FunFam" id="3.30.1510.10:FF:000001">
    <property type="entry name" value="Formate--tetrahydrofolate ligase"/>
    <property type="match status" value="1"/>
</dbReference>
<dbReference type="Gene3D" id="3.30.1510.10">
    <property type="entry name" value="Domain 2, N(10)-formyltetrahydrofolate synthetase"/>
    <property type="match status" value="1"/>
</dbReference>
<dbReference type="Gene3D" id="3.10.410.10">
    <property type="entry name" value="Formyltetrahydrofolate synthetase, domain 3"/>
    <property type="match status" value="1"/>
</dbReference>
<dbReference type="Gene3D" id="3.40.50.300">
    <property type="entry name" value="P-loop containing nucleotide triphosphate hydrolases"/>
    <property type="match status" value="1"/>
</dbReference>
<dbReference type="HAMAP" id="MF_01543">
    <property type="entry name" value="FTHFS"/>
    <property type="match status" value="1"/>
</dbReference>
<dbReference type="InterPro" id="IPR000559">
    <property type="entry name" value="Formate_THF_ligase"/>
</dbReference>
<dbReference type="InterPro" id="IPR020628">
    <property type="entry name" value="Formate_THF_ligase_CS"/>
</dbReference>
<dbReference type="InterPro" id="IPR027417">
    <property type="entry name" value="P-loop_NTPase"/>
</dbReference>
<dbReference type="NCBIfam" id="NF010030">
    <property type="entry name" value="PRK13505.1"/>
    <property type="match status" value="1"/>
</dbReference>
<dbReference type="Pfam" id="PF01268">
    <property type="entry name" value="FTHFS"/>
    <property type="match status" value="1"/>
</dbReference>
<dbReference type="SUPFAM" id="SSF52540">
    <property type="entry name" value="P-loop containing nucleoside triphosphate hydrolases"/>
    <property type="match status" value="1"/>
</dbReference>
<dbReference type="PROSITE" id="PS00721">
    <property type="entry name" value="FTHFS_1"/>
    <property type="match status" value="1"/>
</dbReference>
<dbReference type="PROSITE" id="PS00722">
    <property type="entry name" value="FTHFS_2"/>
    <property type="match status" value="1"/>
</dbReference>
<gene>
    <name evidence="1" type="primary">fhs</name>
    <name type="ordered locus">Rsph17029_2316</name>
</gene>
<evidence type="ECO:0000255" key="1">
    <source>
        <dbReference type="HAMAP-Rule" id="MF_01543"/>
    </source>
</evidence>
<organism>
    <name type="scientific">Cereibacter sphaeroides (strain ATCC 17029 / ATH 2.4.9)</name>
    <name type="common">Rhodobacter sphaeroides</name>
    <dbReference type="NCBI Taxonomy" id="349101"/>
    <lineage>
        <taxon>Bacteria</taxon>
        <taxon>Pseudomonadati</taxon>
        <taxon>Pseudomonadota</taxon>
        <taxon>Alphaproteobacteria</taxon>
        <taxon>Rhodobacterales</taxon>
        <taxon>Paracoccaceae</taxon>
        <taxon>Cereibacter</taxon>
    </lineage>
</organism>
<accession>A3PM52</accession>
<name>FTHS_CERS1</name>
<keyword id="KW-0067">ATP-binding</keyword>
<keyword id="KW-0436">Ligase</keyword>
<keyword id="KW-0547">Nucleotide-binding</keyword>
<keyword id="KW-0554">One-carbon metabolism</keyword>
<proteinExistence type="inferred from homology"/>
<reference key="1">
    <citation type="submission" date="2007-02" db="EMBL/GenBank/DDBJ databases">
        <title>Complete sequence of chromosome 1 of Rhodobacter sphaeroides ATCC 17029.</title>
        <authorList>
            <person name="Copeland A."/>
            <person name="Lucas S."/>
            <person name="Lapidus A."/>
            <person name="Barry K."/>
            <person name="Detter J.C."/>
            <person name="Glavina del Rio T."/>
            <person name="Hammon N."/>
            <person name="Israni S."/>
            <person name="Dalin E."/>
            <person name="Tice H."/>
            <person name="Pitluck S."/>
            <person name="Kiss H."/>
            <person name="Brettin T."/>
            <person name="Bruce D."/>
            <person name="Han C."/>
            <person name="Tapia R."/>
            <person name="Gilna P."/>
            <person name="Schmutz J."/>
            <person name="Larimer F."/>
            <person name="Land M."/>
            <person name="Hauser L."/>
            <person name="Kyrpides N."/>
            <person name="Mikhailova N."/>
            <person name="Richardson P."/>
            <person name="Mackenzie C."/>
            <person name="Choudhary M."/>
            <person name="Donohue T.J."/>
            <person name="Kaplan S."/>
        </authorList>
    </citation>
    <scope>NUCLEOTIDE SEQUENCE [LARGE SCALE GENOMIC DNA]</scope>
    <source>
        <strain>ATCC 17029 / ATH 2.4.9</strain>
    </source>
</reference>
<protein>
    <recommendedName>
        <fullName evidence="1">Formate--tetrahydrofolate ligase</fullName>
        <ecNumber evidence="1">6.3.4.3</ecNumber>
    </recommendedName>
    <alternativeName>
        <fullName evidence="1">Formyltetrahydrofolate synthetase</fullName>
        <shortName evidence="1">FHS</shortName>
        <shortName evidence="1">FTHFS</shortName>
    </alternativeName>
</protein>
<comment type="catalytic activity">
    <reaction evidence="1">
        <text>(6S)-5,6,7,8-tetrahydrofolate + formate + ATP = (6R)-10-formyltetrahydrofolate + ADP + phosphate</text>
        <dbReference type="Rhea" id="RHEA:20221"/>
        <dbReference type="ChEBI" id="CHEBI:15740"/>
        <dbReference type="ChEBI" id="CHEBI:30616"/>
        <dbReference type="ChEBI" id="CHEBI:43474"/>
        <dbReference type="ChEBI" id="CHEBI:57453"/>
        <dbReference type="ChEBI" id="CHEBI:195366"/>
        <dbReference type="ChEBI" id="CHEBI:456216"/>
        <dbReference type="EC" id="6.3.4.3"/>
    </reaction>
</comment>
<comment type="pathway">
    <text evidence="1">One-carbon metabolism; tetrahydrofolate interconversion.</text>
</comment>
<comment type="similarity">
    <text evidence="1">Belongs to the formate--tetrahydrofolate ligase family.</text>
</comment>
<feature type="chain" id="PRO_0000300535" description="Formate--tetrahydrofolate ligase">
    <location>
        <begin position="1"/>
        <end position="557"/>
    </location>
</feature>
<feature type="binding site" evidence="1">
    <location>
        <begin position="67"/>
        <end position="74"/>
    </location>
    <ligand>
        <name>ATP</name>
        <dbReference type="ChEBI" id="CHEBI:30616"/>
    </ligand>
</feature>
<sequence>MAVQTDIEIARAARKKPIQEIGAGLGIPAEALIPYGHDKAKVGQGFIRGLEGRPDGKLILVTAINPTPAGEGKTTTTVGLGDGLNRIGKKAVICIREASLGPNFGMKGGAAGGGRAQVVPMEDMNLHFTGDFHAITAAHNLLAAMIDNHIYWGNALELDARRITWRRVMDMNDRALRDTVVNLGGVANGFPRQTGFDITVASEVMAILCLADDLEDLERRLGRIVVGYRRDKSPVYCRDLKAAGAMAVLLKDAMQPNLVQTIENNPAFVHGGPFANIAHGCNSVIATRTALKLADYVVTEAGFGADLGAEKFFDIKCRLAGLKPSAAVVVATVRALKMNGGVAREDLGREDVAALRRGCANLGRHIANVKGFGVPVVVAINHFTTDTEAEIEAVRAYAAGQGAEAFLCRHWAEGSAGIEDLAQKVVELAETPSMFAPLYPDDMPLFEKMETVARRIYHAHDVIADHVIRDQLRTWEEAGYGALPVCMAKTQYSFTTDAAIRGAPEGHSIPIREVRLAAGAGFVVAICGEIRTMPGLPSQPAAELIHLDEEGRIEGLF</sequence>